<comment type="function">
    <text evidence="1">Part of the twin-arginine translocation (Tat) system that transports large folded proteins containing a characteristic twin-arginine motif in their signal peptide across membranes. TatA could form the protein-conducting channel of the Tat system.</text>
</comment>
<comment type="subunit">
    <text evidence="1">The Tat system comprises two distinct complexes: a TatABC complex, containing multiple copies of TatA, TatB and TatC subunits, and a separate TatA complex, containing only TatA subunits. Substrates initially bind to the TatABC complex, which probably triggers association of the separate TatA complex to form the active translocon.</text>
</comment>
<comment type="subcellular location">
    <subcellularLocation>
        <location evidence="1">Cell inner membrane</location>
        <topology evidence="1">Single-pass membrane protein</topology>
    </subcellularLocation>
</comment>
<comment type="similarity">
    <text evidence="1">Belongs to the TatA/E family.</text>
</comment>
<sequence length="77" mass="8272">MGGISIWQLLIIALIVVLLFGTKKLRSLGGDLGGAIKGFKNAMSDEEKKALEDKEAAAQTTQQATEKKPEADKKEQA</sequence>
<feature type="chain" id="PRO_1000044437" description="Sec-independent protein translocase protein TatA">
    <location>
        <begin position="1"/>
        <end position="77"/>
    </location>
</feature>
<feature type="transmembrane region" description="Helical" evidence="1">
    <location>
        <begin position="1"/>
        <end position="21"/>
    </location>
</feature>
<feature type="region of interest" description="Disordered" evidence="2">
    <location>
        <begin position="47"/>
        <end position="77"/>
    </location>
</feature>
<feature type="compositionally biased region" description="Basic and acidic residues" evidence="2">
    <location>
        <begin position="47"/>
        <end position="56"/>
    </location>
</feature>
<feature type="compositionally biased region" description="Basic and acidic residues" evidence="2">
    <location>
        <begin position="65"/>
        <end position="77"/>
    </location>
</feature>
<accession>A1SAK1</accession>
<name>TATA_SHEAM</name>
<dbReference type="EMBL" id="CP000507">
    <property type="protein sequence ID" value="ABM01408.1"/>
    <property type="molecule type" value="Genomic_DNA"/>
</dbReference>
<dbReference type="RefSeq" id="WP_011761312.1">
    <property type="nucleotide sequence ID" value="NC_008700.1"/>
</dbReference>
<dbReference type="SMR" id="A1SAK1"/>
<dbReference type="STRING" id="326297.Sama_3205"/>
<dbReference type="KEGG" id="saz:Sama_3205"/>
<dbReference type="eggNOG" id="COG1826">
    <property type="taxonomic scope" value="Bacteria"/>
</dbReference>
<dbReference type="HOGENOM" id="CLU_086034_5_1_6"/>
<dbReference type="Proteomes" id="UP000009175">
    <property type="component" value="Chromosome"/>
</dbReference>
<dbReference type="GO" id="GO:0033281">
    <property type="term" value="C:TAT protein transport complex"/>
    <property type="evidence" value="ECO:0007669"/>
    <property type="project" value="UniProtKB-UniRule"/>
</dbReference>
<dbReference type="GO" id="GO:0008320">
    <property type="term" value="F:protein transmembrane transporter activity"/>
    <property type="evidence" value="ECO:0007669"/>
    <property type="project" value="UniProtKB-UniRule"/>
</dbReference>
<dbReference type="GO" id="GO:0043953">
    <property type="term" value="P:protein transport by the Tat complex"/>
    <property type="evidence" value="ECO:0007669"/>
    <property type="project" value="UniProtKB-UniRule"/>
</dbReference>
<dbReference type="Gene3D" id="1.20.5.3310">
    <property type="match status" value="1"/>
</dbReference>
<dbReference type="HAMAP" id="MF_00236">
    <property type="entry name" value="TatA_E"/>
    <property type="match status" value="1"/>
</dbReference>
<dbReference type="InterPro" id="IPR003369">
    <property type="entry name" value="TatA/B/E"/>
</dbReference>
<dbReference type="InterPro" id="IPR006312">
    <property type="entry name" value="TatA/E"/>
</dbReference>
<dbReference type="NCBIfam" id="NF002813">
    <property type="entry name" value="PRK02958.1"/>
    <property type="match status" value="1"/>
</dbReference>
<dbReference type="NCBIfam" id="TIGR01411">
    <property type="entry name" value="tatAE"/>
    <property type="match status" value="1"/>
</dbReference>
<dbReference type="PANTHER" id="PTHR42982">
    <property type="entry name" value="SEC-INDEPENDENT PROTEIN TRANSLOCASE PROTEIN TATA"/>
    <property type="match status" value="1"/>
</dbReference>
<dbReference type="PANTHER" id="PTHR42982:SF1">
    <property type="entry name" value="SEC-INDEPENDENT PROTEIN TRANSLOCASE PROTEIN TATA"/>
    <property type="match status" value="1"/>
</dbReference>
<dbReference type="Pfam" id="PF02416">
    <property type="entry name" value="TatA_B_E"/>
    <property type="match status" value="1"/>
</dbReference>
<organism>
    <name type="scientific">Shewanella amazonensis (strain ATCC BAA-1098 / SB2B)</name>
    <dbReference type="NCBI Taxonomy" id="326297"/>
    <lineage>
        <taxon>Bacteria</taxon>
        <taxon>Pseudomonadati</taxon>
        <taxon>Pseudomonadota</taxon>
        <taxon>Gammaproteobacteria</taxon>
        <taxon>Alteromonadales</taxon>
        <taxon>Shewanellaceae</taxon>
        <taxon>Shewanella</taxon>
    </lineage>
</organism>
<keyword id="KW-0997">Cell inner membrane</keyword>
<keyword id="KW-1003">Cell membrane</keyword>
<keyword id="KW-0472">Membrane</keyword>
<keyword id="KW-0653">Protein transport</keyword>
<keyword id="KW-1185">Reference proteome</keyword>
<keyword id="KW-0811">Translocation</keyword>
<keyword id="KW-0812">Transmembrane</keyword>
<keyword id="KW-1133">Transmembrane helix</keyword>
<keyword id="KW-0813">Transport</keyword>
<reference key="1">
    <citation type="submission" date="2006-12" db="EMBL/GenBank/DDBJ databases">
        <title>Complete sequence of Shewanella amazonensis SB2B.</title>
        <authorList>
            <consortium name="US DOE Joint Genome Institute"/>
            <person name="Copeland A."/>
            <person name="Lucas S."/>
            <person name="Lapidus A."/>
            <person name="Barry K."/>
            <person name="Detter J.C."/>
            <person name="Glavina del Rio T."/>
            <person name="Hammon N."/>
            <person name="Israni S."/>
            <person name="Dalin E."/>
            <person name="Tice H."/>
            <person name="Pitluck S."/>
            <person name="Munk A.C."/>
            <person name="Brettin T."/>
            <person name="Bruce D."/>
            <person name="Han C."/>
            <person name="Tapia R."/>
            <person name="Gilna P."/>
            <person name="Schmutz J."/>
            <person name="Larimer F."/>
            <person name="Land M."/>
            <person name="Hauser L."/>
            <person name="Kyrpides N."/>
            <person name="Mikhailova N."/>
            <person name="Fredrickson J."/>
            <person name="Richardson P."/>
        </authorList>
    </citation>
    <scope>NUCLEOTIDE SEQUENCE [LARGE SCALE GENOMIC DNA]</scope>
    <source>
        <strain>ATCC BAA-1098 / SB2B</strain>
    </source>
</reference>
<proteinExistence type="inferred from homology"/>
<protein>
    <recommendedName>
        <fullName evidence="1">Sec-independent protein translocase protein TatA</fullName>
    </recommendedName>
</protein>
<gene>
    <name evidence="1" type="primary">tatA</name>
    <name type="ordered locus">Sama_3205</name>
</gene>
<evidence type="ECO:0000255" key="1">
    <source>
        <dbReference type="HAMAP-Rule" id="MF_00236"/>
    </source>
</evidence>
<evidence type="ECO:0000256" key="2">
    <source>
        <dbReference type="SAM" id="MobiDB-lite"/>
    </source>
</evidence>